<reference key="1">
    <citation type="journal article" date="2008" name="J. Bacteriol.">
        <title>Genome sequence of a nephritogenic and highly transformable M49 strain of Streptococcus pyogenes.</title>
        <authorList>
            <person name="McShan W.M."/>
            <person name="Ferretti J.J."/>
            <person name="Karasawa T."/>
            <person name="Suvorov A.N."/>
            <person name="Lin S."/>
            <person name="Qin B."/>
            <person name="Jia H."/>
            <person name="Kenton S."/>
            <person name="Najar F."/>
            <person name="Wu H."/>
            <person name="Scott J."/>
            <person name="Roe B.A."/>
            <person name="Savic D.J."/>
        </authorList>
    </citation>
    <scope>NUCLEOTIDE SEQUENCE [LARGE SCALE GENOMIC DNA]</scope>
    <source>
        <strain>NZ131</strain>
    </source>
</reference>
<feature type="chain" id="PRO_0000379409" description="ATP-dependent helicase/deoxyribonuclease subunit B">
    <location>
        <begin position="1"/>
        <end position="1071"/>
    </location>
</feature>
<comment type="function">
    <text evidence="1">The heterodimer acts as both an ATP-dependent DNA helicase and an ATP-dependent, dual-direction single-stranded exonuclease. Recognizes the chi site generating a DNA molecule suitable for the initiation of homologous recombination. This subunit has 5' -&gt; 3' nuclease activity but not helicase activity.</text>
</comment>
<comment type="cofactor">
    <cofactor evidence="1">
        <name>Mg(2+)</name>
        <dbReference type="ChEBI" id="CHEBI:18420"/>
    </cofactor>
</comment>
<comment type="subunit">
    <text evidence="1">Heterodimer of AddA and RexB.</text>
</comment>
<comment type="miscellaneous">
    <text evidence="1">Despite having helicase-like domains, this subunit does not have helicase activity.</text>
</comment>
<comment type="similarity">
    <text evidence="1">Belongs to the helicase family. AddB/RexB type 2 subfamily.</text>
</comment>
<dbReference type="EC" id="3.1.-.-" evidence="1"/>
<dbReference type="EMBL" id="CP000829">
    <property type="protein sequence ID" value="ACI60925.1"/>
    <property type="molecule type" value="Genomic_DNA"/>
</dbReference>
<dbReference type="SMR" id="B5XKR3"/>
<dbReference type="KEGG" id="soz:Spy49_0603"/>
<dbReference type="HOGENOM" id="CLU_007838_1_0_9"/>
<dbReference type="Proteomes" id="UP000001039">
    <property type="component" value="Chromosome"/>
</dbReference>
<dbReference type="GO" id="GO:0008409">
    <property type="term" value="F:5'-3' exonuclease activity"/>
    <property type="evidence" value="ECO:0007669"/>
    <property type="project" value="UniProtKB-UniRule"/>
</dbReference>
<dbReference type="GO" id="GO:0005524">
    <property type="term" value="F:ATP binding"/>
    <property type="evidence" value="ECO:0007669"/>
    <property type="project" value="UniProtKB-UniRule"/>
</dbReference>
<dbReference type="GO" id="GO:0003690">
    <property type="term" value="F:double-stranded DNA binding"/>
    <property type="evidence" value="ECO:0007669"/>
    <property type="project" value="UniProtKB-UniRule"/>
</dbReference>
<dbReference type="GO" id="GO:0004386">
    <property type="term" value="F:helicase activity"/>
    <property type="evidence" value="ECO:0007669"/>
    <property type="project" value="UniProtKB-KW"/>
</dbReference>
<dbReference type="GO" id="GO:0016817">
    <property type="term" value="F:hydrolase activity, acting on acid anhydrides"/>
    <property type="evidence" value="ECO:0007669"/>
    <property type="project" value="InterPro"/>
</dbReference>
<dbReference type="GO" id="GO:0000724">
    <property type="term" value="P:double-strand break repair via homologous recombination"/>
    <property type="evidence" value="ECO:0007669"/>
    <property type="project" value="UniProtKB-UniRule"/>
</dbReference>
<dbReference type="Gene3D" id="3.90.320.10">
    <property type="match status" value="1"/>
</dbReference>
<dbReference type="Gene3D" id="3.40.50.300">
    <property type="entry name" value="P-loop containing nucleotide triphosphate hydrolases"/>
    <property type="match status" value="3"/>
</dbReference>
<dbReference type="HAMAP" id="MF_01453">
    <property type="entry name" value="AddB_type2"/>
    <property type="match status" value="1"/>
</dbReference>
<dbReference type="InterPro" id="IPR049035">
    <property type="entry name" value="ADDB_N"/>
</dbReference>
<dbReference type="InterPro" id="IPR014141">
    <property type="entry name" value="DNA_helicase_suRexB"/>
</dbReference>
<dbReference type="InterPro" id="IPR027417">
    <property type="entry name" value="P-loop_NTPase"/>
</dbReference>
<dbReference type="InterPro" id="IPR011604">
    <property type="entry name" value="PDDEXK-like_dom_sf"/>
</dbReference>
<dbReference type="InterPro" id="IPR038726">
    <property type="entry name" value="PDDEXK_AddAB-type"/>
</dbReference>
<dbReference type="InterPro" id="IPR011335">
    <property type="entry name" value="Restrct_endonuc-II-like"/>
</dbReference>
<dbReference type="NCBIfam" id="TIGR02774">
    <property type="entry name" value="rexB_recomb"/>
    <property type="match status" value="1"/>
</dbReference>
<dbReference type="PANTHER" id="PTHR30591">
    <property type="entry name" value="RECBCD ENZYME SUBUNIT RECC"/>
    <property type="match status" value="1"/>
</dbReference>
<dbReference type="PANTHER" id="PTHR30591:SF1">
    <property type="entry name" value="RECBCD ENZYME SUBUNIT RECC"/>
    <property type="match status" value="1"/>
</dbReference>
<dbReference type="Pfam" id="PF21445">
    <property type="entry name" value="ADDB_N"/>
    <property type="match status" value="1"/>
</dbReference>
<dbReference type="Pfam" id="PF12705">
    <property type="entry name" value="PDDEXK_1"/>
    <property type="match status" value="1"/>
</dbReference>
<dbReference type="SUPFAM" id="SSF52540">
    <property type="entry name" value="P-loop containing nucleoside triphosphate hydrolases"/>
    <property type="match status" value="1"/>
</dbReference>
<dbReference type="SUPFAM" id="SSF52980">
    <property type="entry name" value="Restriction endonuclease-like"/>
    <property type="match status" value="1"/>
</dbReference>
<accession>B5XKR3</accession>
<evidence type="ECO:0000255" key="1">
    <source>
        <dbReference type="HAMAP-Rule" id="MF_01453"/>
    </source>
</evidence>
<protein>
    <recommendedName>
        <fullName evidence="1">ATP-dependent helicase/deoxyribonuclease subunit B</fullName>
        <ecNumber evidence="1">3.1.-.-</ecNumber>
    </recommendedName>
    <alternativeName>
        <fullName evidence="1">ATP-dependent helicase/nuclease subunit RexB</fullName>
    </alternativeName>
</protein>
<sequence>MKLIYTEMSYSMTEILVNEARKAADQGYRVFYIAPNSLSFEKEREVLTLLPERGTFSIIVTRFVQMSRYFTVESSPSKQHLDDTTLAMIFYRALMQLKPEDLPSYGRLQNNSVFIEQLVELYKELKNAQLSVHDLTGLDHPQKQEDLIKIIELAETIMIQQDYNQDSPLQSFARAIKLGLLNNQLSKTVVVIDGFSRFSAEEDYLLSLLNNNCQEVIIGSYVSQKAYQKSFIKGNIYEASLHFLQDLAQKYHIKPVFATSNQVFKPAFSRLTQLFEATHDFSQVDWQLQKNDLDHFSLWQCHHQKEEIEHVAKSIRQKLYEGYRYKDILVLLGDMDAYQLQIGPIFDKFEIPYYLGKAEPMAAHPLVQFIESLERSQRYNWRREDILNMLKSGLFGCFDDSDIDRFEEYTQFADIKGFTKFSKPFTINSSRQYPLDFLNEMRQDIVLPLQELFKSQKQLGASLVDKLILFLKKIRLAENMQGLAQSQLEVEKNEEVWKRFTDILTSFHHIFGQEKLRLSDCLALIKTGMKSAQYRVVPATLDVVTIKSYDLVQPHSKPFVYAIGLTQSHFPKQIHHSGLLSDQERARINEIRNYRHFDIASAENSKKNHQTALSLFNAATKELVLSVPTVINETFDDLSPYLKELINFGLPLLDKGKNYLSYDNSDIANYKALLSQIIAINRQDLIEMADQDKMFWTGVLRYLRKQLRKQQLELPTSDYRLSTKPLSKEVIEVCFPKGIPLKLSATALTVFYNNQYNYFLKYVLNLNKTESIHPDSRIHGQYLHRVFERLMKDHTQEPFDNKLKQAIYHTNQESFFQQVYQDNAEAEYSLAILEDIVRSTAPILQLNQNIQVIDQEKNFQLDMGNEILVHGIIDRIDQLSDGSLGIVDYKSSANQFDIGTFYNGLSPQLVTYLAALKQIAPHDINQLFGAMYLHLQDPKLDLVTFKQIDNTLVESIYKALTYKGIFSEVEKEHLSTGAYQTKNALYSNDELETLLNYNKYLYLKAAKHIKKGHFLINPYTSDGKTVQGDQLKAITRFEADLDMGQARRLVTLPAKEKKECFLTLMRKESHL</sequence>
<organism>
    <name type="scientific">Streptococcus pyogenes serotype M49 (strain NZ131)</name>
    <dbReference type="NCBI Taxonomy" id="471876"/>
    <lineage>
        <taxon>Bacteria</taxon>
        <taxon>Bacillati</taxon>
        <taxon>Bacillota</taxon>
        <taxon>Bacilli</taxon>
        <taxon>Lactobacillales</taxon>
        <taxon>Streptococcaceae</taxon>
        <taxon>Streptococcus</taxon>
    </lineage>
</organism>
<gene>
    <name evidence="1" type="primary">rexB</name>
    <name type="ordered locus">Spy49_0603</name>
</gene>
<keyword id="KW-0067">ATP-binding</keyword>
<keyword id="KW-0227">DNA damage</keyword>
<keyword id="KW-0234">DNA repair</keyword>
<keyword id="KW-0238">DNA-binding</keyword>
<keyword id="KW-0269">Exonuclease</keyword>
<keyword id="KW-0347">Helicase</keyword>
<keyword id="KW-0378">Hydrolase</keyword>
<keyword id="KW-0540">Nuclease</keyword>
<keyword id="KW-0547">Nucleotide-binding</keyword>
<name>ADDB_STRPZ</name>
<proteinExistence type="inferred from homology"/>